<organism>
    <name type="scientific">Shewanella sp. (strain MR-7)</name>
    <dbReference type="NCBI Taxonomy" id="60481"/>
    <lineage>
        <taxon>Bacteria</taxon>
        <taxon>Pseudomonadati</taxon>
        <taxon>Pseudomonadota</taxon>
        <taxon>Gammaproteobacteria</taxon>
        <taxon>Alteromonadales</taxon>
        <taxon>Shewanellaceae</taxon>
        <taxon>Shewanella</taxon>
    </lineage>
</organism>
<dbReference type="EC" id="2.4.2.21" evidence="1"/>
<dbReference type="EMBL" id="CP000444">
    <property type="protein sequence ID" value="ABI44164.1"/>
    <property type="molecule type" value="Genomic_DNA"/>
</dbReference>
<dbReference type="SMR" id="Q0HRU1"/>
<dbReference type="KEGG" id="shm:Shewmr7_3180"/>
<dbReference type="HOGENOM" id="CLU_002982_0_0_6"/>
<dbReference type="UniPathway" id="UPA00061">
    <property type="reaction ID" value="UER00516"/>
</dbReference>
<dbReference type="GO" id="GO:0008939">
    <property type="term" value="F:nicotinate-nucleotide-dimethylbenzimidazole phosphoribosyltransferase activity"/>
    <property type="evidence" value="ECO:0007669"/>
    <property type="project" value="UniProtKB-UniRule"/>
</dbReference>
<dbReference type="GO" id="GO:0009236">
    <property type="term" value="P:cobalamin biosynthetic process"/>
    <property type="evidence" value="ECO:0007669"/>
    <property type="project" value="UniProtKB-KW"/>
</dbReference>
<dbReference type="CDD" id="cd02439">
    <property type="entry name" value="DMB-PRT_CobT"/>
    <property type="match status" value="1"/>
</dbReference>
<dbReference type="FunFam" id="3.40.50.10210:FF:000001">
    <property type="entry name" value="Nicotinate-nucleotide--dimethylbenzimidazole phosphoribosyltransferase"/>
    <property type="match status" value="1"/>
</dbReference>
<dbReference type="Gene3D" id="1.10.1610.10">
    <property type="match status" value="1"/>
</dbReference>
<dbReference type="Gene3D" id="3.40.50.10210">
    <property type="match status" value="1"/>
</dbReference>
<dbReference type="HAMAP" id="MF_00230">
    <property type="entry name" value="CobT"/>
    <property type="match status" value="1"/>
</dbReference>
<dbReference type="InterPro" id="IPR003200">
    <property type="entry name" value="Nict_dMeBzImd_PRibTrfase"/>
</dbReference>
<dbReference type="InterPro" id="IPR017846">
    <property type="entry name" value="Nict_dMeBzImd_PRibTrfase_bact"/>
</dbReference>
<dbReference type="InterPro" id="IPR023195">
    <property type="entry name" value="Nict_dMeBzImd_PRibTrfase_N"/>
</dbReference>
<dbReference type="InterPro" id="IPR036087">
    <property type="entry name" value="Nict_dMeBzImd_PRibTrfase_sf"/>
</dbReference>
<dbReference type="NCBIfam" id="TIGR03160">
    <property type="entry name" value="cobT_DBIPRT"/>
    <property type="match status" value="1"/>
</dbReference>
<dbReference type="NCBIfam" id="NF000996">
    <property type="entry name" value="PRK00105.1"/>
    <property type="match status" value="1"/>
</dbReference>
<dbReference type="PANTHER" id="PTHR43463">
    <property type="entry name" value="NICOTINATE-NUCLEOTIDE--DIMETHYLBENZIMIDAZOLE PHOSPHORIBOSYLTRANSFERASE"/>
    <property type="match status" value="1"/>
</dbReference>
<dbReference type="PANTHER" id="PTHR43463:SF1">
    <property type="entry name" value="NICOTINATE-NUCLEOTIDE--DIMETHYLBENZIMIDAZOLE PHOSPHORIBOSYLTRANSFERASE"/>
    <property type="match status" value="1"/>
</dbReference>
<dbReference type="Pfam" id="PF02277">
    <property type="entry name" value="DBI_PRT"/>
    <property type="match status" value="1"/>
</dbReference>
<dbReference type="SUPFAM" id="SSF52733">
    <property type="entry name" value="Nicotinate mononucleotide:5,6-dimethylbenzimidazole phosphoribosyltransferase (CobT)"/>
    <property type="match status" value="1"/>
</dbReference>
<keyword id="KW-0169">Cobalamin biosynthesis</keyword>
<keyword id="KW-0328">Glycosyltransferase</keyword>
<keyword id="KW-0808">Transferase</keyword>
<proteinExistence type="inferred from homology"/>
<gene>
    <name evidence="1" type="primary">cobT</name>
    <name type="ordered locus">Shewmr7_3180</name>
</gene>
<comment type="function">
    <text evidence="1">Catalyzes the synthesis of alpha-ribazole-5'-phosphate from nicotinate mononucleotide (NAMN) and 5,6-dimethylbenzimidazole (DMB).</text>
</comment>
<comment type="catalytic activity">
    <reaction evidence="1">
        <text>5,6-dimethylbenzimidazole + nicotinate beta-D-ribonucleotide = alpha-ribazole 5'-phosphate + nicotinate + H(+)</text>
        <dbReference type="Rhea" id="RHEA:11196"/>
        <dbReference type="ChEBI" id="CHEBI:15378"/>
        <dbReference type="ChEBI" id="CHEBI:15890"/>
        <dbReference type="ChEBI" id="CHEBI:32544"/>
        <dbReference type="ChEBI" id="CHEBI:57502"/>
        <dbReference type="ChEBI" id="CHEBI:57918"/>
        <dbReference type="EC" id="2.4.2.21"/>
    </reaction>
</comment>
<comment type="pathway">
    <text evidence="1">Nucleoside biosynthesis; alpha-ribazole biosynthesis; alpha-ribazole from 5,6-dimethylbenzimidazole: step 1/2.</text>
</comment>
<comment type="similarity">
    <text evidence="1">Belongs to the CobT family.</text>
</comment>
<feature type="chain" id="PRO_1000021632" description="Nicotinate-nucleotide--dimethylbenzimidazole phosphoribosyltransferase">
    <location>
        <begin position="1"/>
        <end position="350"/>
    </location>
</feature>
<feature type="active site" description="Proton acceptor" evidence="1">
    <location>
        <position position="317"/>
    </location>
</feature>
<reference key="1">
    <citation type="submission" date="2006-08" db="EMBL/GenBank/DDBJ databases">
        <title>Complete sequence of chromosome 1 of Shewanella sp. MR-7.</title>
        <authorList>
            <person name="Copeland A."/>
            <person name="Lucas S."/>
            <person name="Lapidus A."/>
            <person name="Barry K."/>
            <person name="Detter J.C."/>
            <person name="Glavina del Rio T."/>
            <person name="Hammon N."/>
            <person name="Israni S."/>
            <person name="Dalin E."/>
            <person name="Tice H."/>
            <person name="Pitluck S."/>
            <person name="Kiss H."/>
            <person name="Brettin T."/>
            <person name="Bruce D."/>
            <person name="Han C."/>
            <person name="Tapia R."/>
            <person name="Gilna P."/>
            <person name="Schmutz J."/>
            <person name="Larimer F."/>
            <person name="Land M."/>
            <person name="Hauser L."/>
            <person name="Kyrpides N."/>
            <person name="Mikhailova N."/>
            <person name="Nealson K."/>
            <person name="Konstantinidis K."/>
            <person name="Klappenbach J."/>
            <person name="Tiedje J."/>
            <person name="Richardson P."/>
        </authorList>
    </citation>
    <scope>NUCLEOTIDE SEQUENCE [LARGE SCALE GENOMIC DNA]</scope>
    <source>
        <strain>MR-7</strain>
    </source>
</reference>
<evidence type="ECO:0000255" key="1">
    <source>
        <dbReference type="HAMAP-Rule" id="MF_00230"/>
    </source>
</evidence>
<accession>Q0HRU1</accession>
<name>COBT_SHESR</name>
<protein>
    <recommendedName>
        <fullName evidence="1">Nicotinate-nucleotide--dimethylbenzimidazole phosphoribosyltransferase</fullName>
        <shortName evidence="1">NN:DBI PRT</shortName>
        <ecNumber evidence="1">2.4.2.21</ecNumber>
    </recommendedName>
    <alternativeName>
        <fullName evidence="1">N(1)-alpha-phosphoribosyltransferase</fullName>
    </alternativeName>
</protein>
<sequence length="350" mass="36904">MSQSVPSFQIEPVSKAQDQFIQQKIDLKTKPPGALGLLEPLALQIARIQGPQQLQIVNPTMLVFAGDHGIAAEGVSIAPSEVTRQMVQNFAHGGAAINVFCRQLGFNLEVIDCGILTPVEGVEGIIDQRLGAGTGAIHLEPAMSLACVDKGFAMAQALIERHHQAGCNLVAFGEMGIGNTSSAAAIMAAIMQLDVADCVGRGTGISSETLERKQMLIELALLLHQSAMTGPKQVLACLGGFEIVQMTGAMLAAAERKMLVVVDGFIATAAALVAVTINAHVRDYLIFAHRSEEQGHQRMLEHLKAKPLLSLGLRLGEGTGAALALPLIQAAVNFYNQMASFSDAGIEAVV</sequence>